<sequence length="286" mass="31364">MAGAKEIRSKIASIKSTQKITSAMEKVAVSKMRKAQMRMAASRPYAERIRQVIGHLANANPEYRHPFMIERPVKRVGYVVVSSDRGLCGGLNTNLFKTLVKDMAVNRENGVEIDLCVVGSKGAAFFRNFGGNVVAAISHLGEEPSINDLIGSVKVMLDAYLDGRIDRLSVVSNKFINTMTQQPTVEQLIPLVATPDQGLKHHWDYLYEPDAKELLDGLMVRYVESQVYQAVVENNAAEQAARMIAMKNATDNAGDLISDLQLIYNKARQAAITQEISEIVGGAAAV</sequence>
<keyword id="KW-0066">ATP synthesis</keyword>
<keyword id="KW-0997">Cell inner membrane</keyword>
<keyword id="KW-1003">Cell membrane</keyword>
<keyword id="KW-0139">CF(1)</keyword>
<keyword id="KW-0375">Hydrogen ion transport</keyword>
<keyword id="KW-0406">Ion transport</keyword>
<keyword id="KW-0472">Membrane</keyword>
<keyword id="KW-0813">Transport</keyword>
<name>ATPG_PSE14</name>
<protein>
    <recommendedName>
        <fullName evidence="1">ATP synthase gamma chain</fullName>
    </recommendedName>
    <alternativeName>
        <fullName evidence="1">ATP synthase F1 sector gamma subunit</fullName>
    </alternativeName>
    <alternativeName>
        <fullName evidence="1">F-ATPase gamma subunit</fullName>
    </alternativeName>
</protein>
<comment type="function">
    <text evidence="1">Produces ATP from ADP in the presence of a proton gradient across the membrane. The gamma chain is believed to be important in regulating ATPase activity and the flow of protons through the CF(0) complex.</text>
</comment>
<comment type="subunit">
    <text evidence="1">F-type ATPases have 2 components, CF(1) - the catalytic core - and CF(0) - the membrane proton channel. CF(1) has five subunits: alpha(3), beta(3), gamma(1), delta(1), epsilon(1). CF(0) has three main subunits: a, b and c.</text>
</comment>
<comment type="subcellular location">
    <subcellularLocation>
        <location evidence="1">Cell inner membrane</location>
        <topology evidence="1">Peripheral membrane protein</topology>
    </subcellularLocation>
</comment>
<comment type="similarity">
    <text evidence="1">Belongs to the ATPase gamma chain family.</text>
</comment>
<evidence type="ECO:0000255" key="1">
    <source>
        <dbReference type="HAMAP-Rule" id="MF_00815"/>
    </source>
</evidence>
<reference key="1">
    <citation type="journal article" date="2005" name="J. Bacteriol.">
        <title>Whole-genome sequence analysis of Pseudomonas syringae pv. phaseolicola 1448A reveals divergence among pathovars in genes involved in virulence and transposition.</title>
        <authorList>
            <person name="Joardar V."/>
            <person name="Lindeberg M."/>
            <person name="Jackson R.W."/>
            <person name="Selengut J."/>
            <person name="Dodson R."/>
            <person name="Brinkac L.M."/>
            <person name="Daugherty S.C."/>
            <person name="DeBoy R.T."/>
            <person name="Durkin A.S."/>
            <person name="Gwinn Giglio M."/>
            <person name="Madupu R."/>
            <person name="Nelson W.C."/>
            <person name="Rosovitz M.J."/>
            <person name="Sullivan S.A."/>
            <person name="Crabtree J."/>
            <person name="Creasy T."/>
            <person name="Davidsen T.M."/>
            <person name="Haft D.H."/>
            <person name="Zafar N."/>
            <person name="Zhou L."/>
            <person name="Halpin R."/>
            <person name="Holley T."/>
            <person name="Khouri H.M."/>
            <person name="Feldblyum T.V."/>
            <person name="White O."/>
            <person name="Fraser C.M."/>
            <person name="Chatterjee A.K."/>
            <person name="Cartinhour S."/>
            <person name="Schneider D."/>
            <person name="Mansfield J.W."/>
            <person name="Collmer A."/>
            <person name="Buell R."/>
        </authorList>
    </citation>
    <scope>NUCLEOTIDE SEQUENCE [LARGE SCALE GENOMIC DNA]</scope>
    <source>
        <strain>1448A / Race 6</strain>
    </source>
</reference>
<dbReference type="EMBL" id="CP000058">
    <property type="protein sequence ID" value="AAZ37824.1"/>
    <property type="molecule type" value="Genomic_DNA"/>
</dbReference>
<dbReference type="RefSeq" id="WP_003367855.1">
    <property type="nucleotide sequence ID" value="NC_005773.3"/>
</dbReference>
<dbReference type="SMR" id="Q48BG4"/>
<dbReference type="GeneID" id="96221650"/>
<dbReference type="KEGG" id="psp:PSPPH_5208"/>
<dbReference type="eggNOG" id="COG0224">
    <property type="taxonomic scope" value="Bacteria"/>
</dbReference>
<dbReference type="HOGENOM" id="CLU_050669_0_1_6"/>
<dbReference type="Proteomes" id="UP000000551">
    <property type="component" value="Chromosome"/>
</dbReference>
<dbReference type="GO" id="GO:0005886">
    <property type="term" value="C:plasma membrane"/>
    <property type="evidence" value="ECO:0007669"/>
    <property type="project" value="UniProtKB-SubCell"/>
</dbReference>
<dbReference type="GO" id="GO:0045259">
    <property type="term" value="C:proton-transporting ATP synthase complex"/>
    <property type="evidence" value="ECO:0007669"/>
    <property type="project" value="UniProtKB-KW"/>
</dbReference>
<dbReference type="GO" id="GO:0005524">
    <property type="term" value="F:ATP binding"/>
    <property type="evidence" value="ECO:0007669"/>
    <property type="project" value="UniProtKB-UniRule"/>
</dbReference>
<dbReference type="GO" id="GO:0046933">
    <property type="term" value="F:proton-transporting ATP synthase activity, rotational mechanism"/>
    <property type="evidence" value="ECO:0007669"/>
    <property type="project" value="UniProtKB-UniRule"/>
</dbReference>
<dbReference type="GO" id="GO:0042777">
    <property type="term" value="P:proton motive force-driven plasma membrane ATP synthesis"/>
    <property type="evidence" value="ECO:0007669"/>
    <property type="project" value="UniProtKB-UniRule"/>
</dbReference>
<dbReference type="CDD" id="cd12151">
    <property type="entry name" value="F1-ATPase_gamma"/>
    <property type="match status" value="1"/>
</dbReference>
<dbReference type="FunFam" id="1.10.287.80:FF:000005">
    <property type="entry name" value="ATP synthase gamma chain"/>
    <property type="match status" value="1"/>
</dbReference>
<dbReference type="FunFam" id="3.40.1380.10:FF:000001">
    <property type="entry name" value="ATP synthase gamma chain"/>
    <property type="match status" value="1"/>
</dbReference>
<dbReference type="Gene3D" id="3.40.1380.10">
    <property type="match status" value="1"/>
</dbReference>
<dbReference type="Gene3D" id="1.10.287.80">
    <property type="entry name" value="ATP synthase, gamma subunit, helix hairpin domain"/>
    <property type="match status" value="1"/>
</dbReference>
<dbReference type="HAMAP" id="MF_00815">
    <property type="entry name" value="ATP_synth_gamma_bact"/>
    <property type="match status" value="1"/>
</dbReference>
<dbReference type="InterPro" id="IPR035968">
    <property type="entry name" value="ATP_synth_F1_ATPase_gsu"/>
</dbReference>
<dbReference type="InterPro" id="IPR000131">
    <property type="entry name" value="ATP_synth_F1_gsu"/>
</dbReference>
<dbReference type="InterPro" id="IPR023632">
    <property type="entry name" value="ATP_synth_F1_gsu_CS"/>
</dbReference>
<dbReference type="NCBIfam" id="TIGR01146">
    <property type="entry name" value="ATPsyn_F1gamma"/>
    <property type="match status" value="1"/>
</dbReference>
<dbReference type="NCBIfam" id="NF004144">
    <property type="entry name" value="PRK05621.1-1"/>
    <property type="match status" value="1"/>
</dbReference>
<dbReference type="PANTHER" id="PTHR11693">
    <property type="entry name" value="ATP SYNTHASE GAMMA CHAIN"/>
    <property type="match status" value="1"/>
</dbReference>
<dbReference type="PANTHER" id="PTHR11693:SF22">
    <property type="entry name" value="ATP SYNTHASE SUBUNIT GAMMA, MITOCHONDRIAL"/>
    <property type="match status" value="1"/>
</dbReference>
<dbReference type="Pfam" id="PF00231">
    <property type="entry name" value="ATP-synt"/>
    <property type="match status" value="1"/>
</dbReference>
<dbReference type="PRINTS" id="PR00126">
    <property type="entry name" value="ATPASEGAMMA"/>
</dbReference>
<dbReference type="SUPFAM" id="SSF52943">
    <property type="entry name" value="ATP synthase (F1-ATPase), gamma subunit"/>
    <property type="match status" value="1"/>
</dbReference>
<dbReference type="PROSITE" id="PS00153">
    <property type="entry name" value="ATPASE_GAMMA"/>
    <property type="match status" value="1"/>
</dbReference>
<feature type="chain" id="PRO_0000073348" description="ATP synthase gamma chain">
    <location>
        <begin position="1"/>
        <end position="286"/>
    </location>
</feature>
<accession>Q48BG4</accession>
<proteinExistence type="inferred from homology"/>
<organism>
    <name type="scientific">Pseudomonas savastanoi pv. phaseolicola (strain 1448A / Race 6)</name>
    <name type="common">Pseudomonas syringae pv. phaseolicola (strain 1448A / Race 6)</name>
    <dbReference type="NCBI Taxonomy" id="264730"/>
    <lineage>
        <taxon>Bacteria</taxon>
        <taxon>Pseudomonadati</taxon>
        <taxon>Pseudomonadota</taxon>
        <taxon>Gammaproteobacteria</taxon>
        <taxon>Pseudomonadales</taxon>
        <taxon>Pseudomonadaceae</taxon>
        <taxon>Pseudomonas</taxon>
    </lineage>
</organism>
<gene>
    <name evidence="1" type="primary">atpG</name>
    <name type="ordered locus">PSPPH_5208</name>
</gene>